<evidence type="ECO:0000255" key="1">
    <source>
        <dbReference type="HAMAP-Rule" id="MF_00104"/>
    </source>
</evidence>
<protein>
    <recommendedName>
        <fullName evidence="1">Ribonuclease 3</fullName>
        <ecNumber evidence="1">3.1.26.3</ecNumber>
    </recommendedName>
    <alternativeName>
        <fullName evidence="1">Ribonuclease III</fullName>
        <shortName evidence="1">RNase III</shortName>
    </alternativeName>
</protein>
<sequence>MNHLDRLERKIGYCFNDIALLKQALTHRSAATQHNERLEFLGDSILNFTIAEALYHQFPRCNEGELSRMRATLVREPTLAILARQFELGDYMSLGSGELKNGGFRRESILADCVEAIIGAMSLDQGLAVTTQVIRNWYQQLLAEIKPGDNQKDAKTRLQEYLQGKHLPLPTYEVVNIQGEAHCQIFTVECKVKSAGKIDRTFVAKGSSRRKAEQAAAEQILKELDIK</sequence>
<organism>
    <name type="scientific">Haemophilus influenzae (strain 86-028NP)</name>
    <dbReference type="NCBI Taxonomy" id="281310"/>
    <lineage>
        <taxon>Bacteria</taxon>
        <taxon>Pseudomonadati</taxon>
        <taxon>Pseudomonadota</taxon>
        <taxon>Gammaproteobacteria</taxon>
        <taxon>Pasteurellales</taxon>
        <taxon>Pasteurellaceae</taxon>
        <taxon>Haemophilus</taxon>
    </lineage>
</organism>
<reference key="1">
    <citation type="journal article" date="2005" name="J. Bacteriol.">
        <title>Genomic sequence of an otitis media isolate of nontypeable Haemophilus influenzae: comparative study with H. influenzae serotype d, strain KW20.</title>
        <authorList>
            <person name="Harrison A."/>
            <person name="Dyer D.W."/>
            <person name="Gillaspy A."/>
            <person name="Ray W.C."/>
            <person name="Mungur R."/>
            <person name="Carson M.B."/>
            <person name="Zhong H."/>
            <person name="Gipson J."/>
            <person name="Gipson M."/>
            <person name="Johnson L.S."/>
            <person name="Lewis L."/>
            <person name="Bakaletz L.O."/>
            <person name="Munson R.S. Jr."/>
        </authorList>
    </citation>
    <scope>NUCLEOTIDE SEQUENCE [LARGE SCALE GENOMIC DNA]</scope>
    <source>
        <strain>86-028NP</strain>
    </source>
</reference>
<gene>
    <name evidence="1" type="primary">rnc</name>
    <name type="ordered locus">NTHI0019</name>
</gene>
<proteinExistence type="inferred from homology"/>
<name>RNC_HAEI8</name>
<dbReference type="EC" id="3.1.26.3" evidence="1"/>
<dbReference type="EMBL" id="CP000057">
    <property type="protein sequence ID" value="AAX87017.1"/>
    <property type="molecule type" value="Genomic_DNA"/>
</dbReference>
<dbReference type="RefSeq" id="WP_005649882.1">
    <property type="nucleotide sequence ID" value="NC_007146.2"/>
</dbReference>
<dbReference type="SMR" id="Q4QPN0"/>
<dbReference type="KEGG" id="hit:NTHI0019"/>
<dbReference type="HOGENOM" id="CLU_000907_1_1_6"/>
<dbReference type="Proteomes" id="UP000002525">
    <property type="component" value="Chromosome"/>
</dbReference>
<dbReference type="GO" id="GO:0005737">
    <property type="term" value="C:cytoplasm"/>
    <property type="evidence" value="ECO:0007669"/>
    <property type="project" value="UniProtKB-SubCell"/>
</dbReference>
<dbReference type="GO" id="GO:0003725">
    <property type="term" value="F:double-stranded RNA binding"/>
    <property type="evidence" value="ECO:0007669"/>
    <property type="project" value="TreeGrafter"/>
</dbReference>
<dbReference type="GO" id="GO:0046872">
    <property type="term" value="F:metal ion binding"/>
    <property type="evidence" value="ECO:0007669"/>
    <property type="project" value="UniProtKB-KW"/>
</dbReference>
<dbReference type="GO" id="GO:0004525">
    <property type="term" value="F:ribonuclease III activity"/>
    <property type="evidence" value="ECO:0007669"/>
    <property type="project" value="UniProtKB-UniRule"/>
</dbReference>
<dbReference type="GO" id="GO:0019843">
    <property type="term" value="F:rRNA binding"/>
    <property type="evidence" value="ECO:0007669"/>
    <property type="project" value="UniProtKB-KW"/>
</dbReference>
<dbReference type="GO" id="GO:0006397">
    <property type="term" value="P:mRNA processing"/>
    <property type="evidence" value="ECO:0007669"/>
    <property type="project" value="UniProtKB-UniRule"/>
</dbReference>
<dbReference type="GO" id="GO:0010468">
    <property type="term" value="P:regulation of gene expression"/>
    <property type="evidence" value="ECO:0007669"/>
    <property type="project" value="TreeGrafter"/>
</dbReference>
<dbReference type="GO" id="GO:0006364">
    <property type="term" value="P:rRNA processing"/>
    <property type="evidence" value="ECO:0007669"/>
    <property type="project" value="UniProtKB-UniRule"/>
</dbReference>
<dbReference type="GO" id="GO:0008033">
    <property type="term" value="P:tRNA processing"/>
    <property type="evidence" value="ECO:0007669"/>
    <property type="project" value="UniProtKB-KW"/>
</dbReference>
<dbReference type="CDD" id="cd10845">
    <property type="entry name" value="DSRM_RNAse_III_family"/>
    <property type="match status" value="1"/>
</dbReference>
<dbReference type="CDD" id="cd00593">
    <property type="entry name" value="RIBOc"/>
    <property type="match status" value="1"/>
</dbReference>
<dbReference type="FunFam" id="1.10.1520.10:FF:000001">
    <property type="entry name" value="Ribonuclease 3"/>
    <property type="match status" value="1"/>
</dbReference>
<dbReference type="FunFam" id="3.30.160.20:FF:000003">
    <property type="entry name" value="Ribonuclease 3"/>
    <property type="match status" value="1"/>
</dbReference>
<dbReference type="Gene3D" id="3.30.160.20">
    <property type="match status" value="1"/>
</dbReference>
<dbReference type="Gene3D" id="1.10.1520.10">
    <property type="entry name" value="Ribonuclease III domain"/>
    <property type="match status" value="1"/>
</dbReference>
<dbReference type="HAMAP" id="MF_00104">
    <property type="entry name" value="RNase_III"/>
    <property type="match status" value="1"/>
</dbReference>
<dbReference type="InterPro" id="IPR014720">
    <property type="entry name" value="dsRBD_dom"/>
</dbReference>
<dbReference type="InterPro" id="IPR011907">
    <property type="entry name" value="RNase_III"/>
</dbReference>
<dbReference type="InterPro" id="IPR000999">
    <property type="entry name" value="RNase_III_dom"/>
</dbReference>
<dbReference type="InterPro" id="IPR036389">
    <property type="entry name" value="RNase_III_sf"/>
</dbReference>
<dbReference type="NCBIfam" id="TIGR02191">
    <property type="entry name" value="RNaseIII"/>
    <property type="match status" value="1"/>
</dbReference>
<dbReference type="PANTHER" id="PTHR11207:SF0">
    <property type="entry name" value="RIBONUCLEASE 3"/>
    <property type="match status" value="1"/>
</dbReference>
<dbReference type="PANTHER" id="PTHR11207">
    <property type="entry name" value="RIBONUCLEASE III"/>
    <property type="match status" value="1"/>
</dbReference>
<dbReference type="Pfam" id="PF00035">
    <property type="entry name" value="dsrm"/>
    <property type="match status" value="1"/>
</dbReference>
<dbReference type="Pfam" id="PF14622">
    <property type="entry name" value="Ribonucleas_3_3"/>
    <property type="match status" value="1"/>
</dbReference>
<dbReference type="SMART" id="SM00358">
    <property type="entry name" value="DSRM"/>
    <property type="match status" value="1"/>
</dbReference>
<dbReference type="SMART" id="SM00535">
    <property type="entry name" value="RIBOc"/>
    <property type="match status" value="1"/>
</dbReference>
<dbReference type="SUPFAM" id="SSF54768">
    <property type="entry name" value="dsRNA-binding domain-like"/>
    <property type="match status" value="1"/>
</dbReference>
<dbReference type="SUPFAM" id="SSF69065">
    <property type="entry name" value="RNase III domain-like"/>
    <property type="match status" value="1"/>
</dbReference>
<dbReference type="PROSITE" id="PS50137">
    <property type="entry name" value="DS_RBD"/>
    <property type="match status" value="1"/>
</dbReference>
<dbReference type="PROSITE" id="PS00517">
    <property type="entry name" value="RNASE_3_1"/>
    <property type="match status" value="1"/>
</dbReference>
<dbReference type="PROSITE" id="PS50142">
    <property type="entry name" value="RNASE_3_2"/>
    <property type="match status" value="1"/>
</dbReference>
<keyword id="KW-0963">Cytoplasm</keyword>
<keyword id="KW-0255">Endonuclease</keyword>
<keyword id="KW-0378">Hydrolase</keyword>
<keyword id="KW-0460">Magnesium</keyword>
<keyword id="KW-0479">Metal-binding</keyword>
<keyword id="KW-0507">mRNA processing</keyword>
<keyword id="KW-0540">Nuclease</keyword>
<keyword id="KW-0694">RNA-binding</keyword>
<keyword id="KW-0698">rRNA processing</keyword>
<keyword id="KW-0699">rRNA-binding</keyword>
<keyword id="KW-0819">tRNA processing</keyword>
<feature type="chain" id="PRO_0000228536" description="Ribonuclease 3">
    <location>
        <begin position="1"/>
        <end position="227"/>
    </location>
</feature>
<feature type="domain" description="RNase III" evidence="1">
    <location>
        <begin position="4"/>
        <end position="126"/>
    </location>
</feature>
<feature type="domain" description="DRBM" evidence="1">
    <location>
        <begin position="153"/>
        <end position="226"/>
    </location>
</feature>
<feature type="active site" evidence="1">
    <location>
        <position position="43"/>
    </location>
</feature>
<feature type="active site" evidence="1">
    <location>
        <position position="115"/>
    </location>
</feature>
<feature type="binding site" evidence="1">
    <location>
        <position position="39"/>
    </location>
    <ligand>
        <name>Mg(2+)</name>
        <dbReference type="ChEBI" id="CHEBI:18420"/>
    </ligand>
</feature>
<feature type="binding site" evidence="1">
    <location>
        <position position="112"/>
    </location>
    <ligand>
        <name>Mg(2+)</name>
        <dbReference type="ChEBI" id="CHEBI:18420"/>
    </ligand>
</feature>
<feature type="binding site" evidence="1">
    <location>
        <position position="115"/>
    </location>
    <ligand>
        <name>Mg(2+)</name>
        <dbReference type="ChEBI" id="CHEBI:18420"/>
    </ligand>
</feature>
<accession>Q4QPN0</accession>
<comment type="function">
    <text evidence="1">Digests double-stranded RNA. Involved in the processing of primary rRNA transcript to yield the immediate precursors to the large and small rRNAs (23S and 16S). Processes some mRNAs, and tRNAs when they are encoded in the rRNA operon. Processes pre-crRNA and tracrRNA of type II CRISPR loci if present in the organism.</text>
</comment>
<comment type="catalytic activity">
    <reaction evidence="1">
        <text>Endonucleolytic cleavage to 5'-phosphomonoester.</text>
        <dbReference type="EC" id="3.1.26.3"/>
    </reaction>
</comment>
<comment type="cofactor">
    <cofactor evidence="1">
        <name>Mg(2+)</name>
        <dbReference type="ChEBI" id="CHEBI:18420"/>
    </cofactor>
</comment>
<comment type="subunit">
    <text evidence="1">Homodimer.</text>
</comment>
<comment type="subcellular location">
    <subcellularLocation>
        <location evidence="1">Cytoplasm</location>
    </subcellularLocation>
</comment>
<comment type="similarity">
    <text evidence="1">Belongs to the ribonuclease III family.</text>
</comment>